<gene>
    <name evidence="1" type="primary">rplU</name>
    <name type="ordered locus">Avi_4288</name>
</gene>
<feature type="chain" id="PRO_1000166696" description="Large ribosomal subunit protein bL21">
    <location>
        <begin position="1"/>
        <end position="104"/>
    </location>
</feature>
<reference key="1">
    <citation type="journal article" date="2009" name="J. Bacteriol.">
        <title>Genome sequences of three Agrobacterium biovars help elucidate the evolution of multichromosome genomes in bacteria.</title>
        <authorList>
            <person name="Slater S.C."/>
            <person name="Goldman B.S."/>
            <person name="Goodner B."/>
            <person name="Setubal J.C."/>
            <person name="Farrand S.K."/>
            <person name="Nester E.W."/>
            <person name="Burr T.J."/>
            <person name="Banta L."/>
            <person name="Dickerman A.W."/>
            <person name="Paulsen I."/>
            <person name="Otten L."/>
            <person name="Suen G."/>
            <person name="Welch R."/>
            <person name="Almeida N.F."/>
            <person name="Arnold F."/>
            <person name="Burton O.T."/>
            <person name="Du Z."/>
            <person name="Ewing A."/>
            <person name="Godsy E."/>
            <person name="Heisel S."/>
            <person name="Houmiel K.L."/>
            <person name="Jhaveri J."/>
            <person name="Lu J."/>
            <person name="Miller N.M."/>
            <person name="Norton S."/>
            <person name="Chen Q."/>
            <person name="Phoolcharoen W."/>
            <person name="Ohlin V."/>
            <person name="Ondrusek D."/>
            <person name="Pride N."/>
            <person name="Stricklin S.L."/>
            <person name="Sun J."/>
            <person name="Wheeler C."/>
            <person name="Wilson L."/>
            <person name="Zhu H."/>
            <person name="Wood D.W."/>
        </authorList>
    </citation>
    <scope>NUCLEOTIDE SEQUENCE [LARGE SCALE GENOMIC DNA]</scope>
    <source>
        <strain>ATCC BAA-846 / DSM 112012 / S4</strain>
    </source>
</reference>
<name>RL21_ALLAM</name>
<evidence type="ECO:0000255" key="1">
    <source>
        <dbReference type="HAMAP-Rule" id="MF_01363"/>
    </source>
</evidence>
<evidence type="ECO:0000305" key="2"/>
<organism>
    <name type="scientific">Allorhizobium ampelinum (strain ATCC BAA-846 / DSM 112012 / S4)</name>
    <name type="common">Agrobacterium vitis (strain S4)</name>
    <dbReference type="NCBI Taxonomy" id="311402"/>
    <lineage>
        <taxon>Bacteria</taxon>
        <taxon>Pseudomonadati</taxon>
        <taxon>Pseudomonadota</taxon>
        <taxon>Alphaproteobacteria</taxon>
        <taxon>Hyphomicrobiales</taxon>
        <taxon>Rhizobiaceae</taxon>
        <taxon>Rhizobium/Agrobacterium group</taxon>
        <taxon>Allorhizobium</taxon>
        <taxon>Allorhizobium ampelinum</taxon>
    </lineage>
</organism>
<sequence>MFAVIKTGGKQYRVAANDVLTIEKLEAEAGAIVEFTEILVVGVGADATIGAPFVAGATVKAEVVEHNRGKKVIAFKKRRRQNSKRSRGHRQHHTVVRITDIVAA</sequence>
<keyword id="KW-1185">Reference proteome</keyword>
<keyword id="KW-0687">Ribonucleoprotein</keyword>
<keyword id="KW-0689">Ribosomal protein</keyword>
<keyword id="KW-0694">RNA-binding</keyword>
<keyword id="KW-0699">rRNA-binding</keyword>
<protein>
    <recommendedName>
        <fullName evidence="1">Large ribosomal subunit protein bL21</fullName>
    </recommendedName>
    <alternativeName>
        <fullName evidence="2">50S ribosomal protein L21</fullName>
    </alternativeName>
</protein>
<comment type="function">
    <text evidence="1">This protein binds to 23S rRNA in the presence of protein L20.</text>
</comment>
<comment type="subunit">
    <text evidence="1">Part of the 50S ribosomal subunit. Contacts protein L20.</text>
</comment>
<comment type="similarity">
    <text evidence="1">Belongs to the bacterial ribosomal protein bL21 family.</text>
</comment>
<accession>B9JUI4</accession>
<proteinExistence type="inferred from homology"/>
<dbReference type="EMBL" id="CP000633">
    <property type="protein sequence ID" value="ACM38107.1"/>
    <property type="molecule type" value="Genomic_DNA"/>
</dbReference>
<dbReference type="RefSeq" id="WP_015917518.1">
    <property type="nucleotide sequence ID" value="NC_011989.1"/>
</dbReference>
<dbReference type="SMR" id="B9JUI4"/>
<dbReference type="STRING" id="311402.Avi_4288"/>
<dbReference type="GeneID" id="60683610"/>
<dbReference type="KEGG" id="avi:Avi_4288"/>
<dbReference type="eggNOG" id="COG0261">
    <property type="taxonomic scope" value="Bacteria"/>
</dbReference>
<dbReference type="HOGENOM" id="CLU_061463_3_2_5"/>
<dbReference type="Proteomes" id="UP000001596">
    <property type="component" value="Chromosome 1"/>
</dbReference>
<dbReference type="GO" id="GO:0005737">
    <property type="term" value="C:cytoplasm"/>
    <property type="evidence" value="ECO:0007669"/>
    <property type="project" value="UniProtKB-ARBA"/>
</dbReference>
<dbReference type="GO" id="GO:1990904">
    <property type="term" value="C:ribonucleoprotein complex"/>
    <property type="evidence" value="ECO:0007669"/>
    <property type="project" value="UniProtKB-KW"/>
</dbReference>
<dbReference type="GO" id="GO:0005840">
    <property type="term" value="C:ribosome"/>
    <property type="evidence" value="ECO:0007669"/>
    <property type="project" value="UniProtKB-KW"/>
</dbReference>
<dbReference type="GO" id="GO:0019843">
    <property type="term" value="F:rRNA binding"/>
    <property type="evidence" value="ECO:0007669"/>
    <property type="project" value="UniProtKB-UniRule"/>
</dbReference>
<dbReference type="GO" id="GO:0003735">
    <property type="term" value="F:structural constituent of ribosome"/>
    <property type="evidence" value="ECO:0007669"/>
    <property type="project" value="InterPro"/>
</dbReference>
<dbReference type="GO" id="GO:0006412">
    <property type="term" value="P:translation"/>
    <property type="evidence" value="ECO:0007669"/>
    <property type="project" value="UniProtKB-UniRule"/>
</dbReference>
<dbReference type="HAMAP" id="MF_01363">
    <property type="entry name" value="Ribosomal_bL21"/>
    <property type="match status" value="1"/>
</dbReference>
<dbReference type="InterPro" id="IPR028909">
    <property type="entry name" value="bL21-like"/>
</dbReference>
<dbReference type="InterPro" id="IPR036164">
    <property type="entry name" value="bL21-like_sf"/>
</dbReference>
<dbReference type="InterPro" id="IPR001787">
    <property type="entry name" value="Ribosomal_bL21"/>
</dbReference>
<dbReference type="NCBIfam" id="TIGR00061">
    <property type="entry name" value="L21"/>
    <property type="match status" value="1"/>
</dbReference>
<dbReference type="PANTHER" id="PTHR21349">
    <property type="entry name" value="50S RIBOSOMAL PROTEIN L21"/>
    <property type="match status" value="1"/>
</dbReference>
<dbReference type="PANTHER" id="PTHR21349:SF0">
    <property type="entry name" value="LARGE RIBOSOMAL SUBUNIT PROTEIN BL21M"/>
    <property type="match status" value="1"/>
</dbReference>
<dbReference type="Pfam" id="PF00829">
    <property type="entry name" value="Ribosomal_L21p"/>
    <property type="match status" value="1"/>
</dbReference>
<dbReference type="SUPFAM" id="SSF141091">
    <property type="entry name" value="L21p-like"/>
    <property type="match status" value="1"/>
</dbReference>